<sequence>MQKKDILFSIGWPLSSLYAGIMKLRCLLYRRGLFRQHHFPVPVISVGNLTMGGTGKTPVTHYIAKLLLEHGLQPAIISRGYSGKSGGEVNIVSDGQRILLSAEQAGDEPYMLASMLAGVIVITGKKRYLSCKYAVEKMQAEVIILDDGFQHLAVARNLDLVLFDAQTGMGNNRVFPGGDLREARFALDRADAFLITGKCPREEEELLAIELELQHELPQCPLFSVYRTEGVFYSAKQEKVVTHLPKKVFAFCGIANPERFHHDLEKQGFSLVGFKAFSDHQQYTGQCIEEIVKEAKKGGAQAIITTDKDLVKIDSFATELPLYSARPRTTISTDFDELILKTCASFGE</sequence>
<name>LPXK_DESPS</name>
<dbReference type="EC" id="2.7.1.130" evidence="1"/>
<dbReference type="EMBL" id="CR522870">
    <property type="protein sequence ID" value="CAG36667.1"/>
    <property type="molecule type" value="Genomic_DNA"/>
</dbReference>
<dbReference type="RefSeq" id="WP_011189179.1">
    <property type="nucleotide sequence ID" value="NC_006138.1"/>
</dbReference>
<dbReference type="SMR" id="Q6ALV8"/>
<dbReference type="STRING" id="177439.DP1938"/>
<dbReference type="KEGG" id="dps:DP1938"/>
<dbReference type="eggNOG" id="COG1663">
    <property type="taxonomic scope" value="Bacteria"/>
</dbReference>
<dbReference type="HOGENOM" id="CLU_038816_6_0_7"/>
<dbReference type="OrthoDB" id="9766423at2"/>
<dbReference type="UniPathway" id="UPA00359">
    <property type="reaction ID" value="UER00482"/>
</dbReference>
<dbReference type="Proteomes" id="UP000000602">
    <property type="component" value="Chromosome"/>
</dbReference>
<dbReference type="GO" id="GO:0005886">
    <property type="term" value="C:plasma membrane"/>
    <property type="evidence" value="ECO:0007669"/>
    <property type="project" value="TreeGrafter"/>
</dbReference>
<dbReference type="GO" id="GO:0005524">
    <property type="term" value="F:ATP binding"/>
    <property type="evidence" value="ECO:0007669"/>
    <property type="project" value="UniProtKB-UniRule"/>
</dbReference>
<dbReference type="GO" id="GO:0009029">
    <property type="term" value="F:tetraacyldisaccharide 4'-kinase activity"/>
    <property type="evidence" value="ECO:0007669"/>
    <property type="project" value="UniProtKB-UniRule"/>
</dbReference>
<dbReference type="GO" id="GO:0009245">
    <property type="term" value="P:lipid A biosynthetic process"/>
    <property type="evidence" value="ECO:0007669"/>
    <property type="project" value="UniProtKB-UniRule"/>
</dbReference>
<dbReference type="GO" id="GO:0009244">
    <property type="term" value="P:lipopolysaccharide core region biosynthetic process"/>
    <property type="evidence" value="ECO:0007669"/>
    <property type="project" value="TreeGrafter"/>
</dbReference>
<dbReference type="HAMAP" id="MF_00409">
    <property type="entry name" value="LpxK"/>
    <property type="match status" value="1"/>
</dbReference>
<dbReference type="InterPro" id="IPR003758">
    <property type="entry name" value="LpxK"/>
</dbReference>
<dbReference type="InterPro" id="IPR027417">
    <property type="entry name" value="P-loop_NTPase"/>
</dbReference>
<dbReference type="NCBIfam" id="TIGR00682">
    <property type="entry name" value="lpxK"/>
    <property type="match status" value="1"/>
</dbReference>
<dbReference type="PANTHER" id="PTHR42724">
    <property type="entry name" value="TETRAACYLDISACCHARIDE 4'-KINASE"/>
    <property type="match status" value="1"/>
</dbReference>
<dbReference type="PANTHER" id="PTHR42724:SF1">
    <property type="entry name" value="TETRAACYLDISACCHARIDE 4'-KINASE, MITOCHONDRIAL-RELATED"/>
    <property type="match status" value="1"/>
</dbReference>
<dbReference type="Pfam" id="PF02606">
    <property type="entry name" value="LpxK"/>
    <property type="match status" value="1"/>
</dbReference>
<dbReference type="SUPFAM" id="SSF52540">
    <property type="entry name" value="P-loop containing nucleoside triphosphate hydrolases"/>
    <property type="match status" value="1"/>
</dbReference>
<protein>
    <recommendedName>
        <fullName evidence="1">Tetraacyldisaccharide 4'-kinase</fullName>
        <ecNumber evidence="1">2.7.1.130</ecNumber>
    </recommendedName>
    <alternativeName>
        <fullName evidence="1">Lipid A 4'-kinase</fullName>
    </alternativeName>
</protein>
<keyword id="KW-0067">ATP-binding</keyword>
<keyword id="KW-0418">Kinase</keyword>
<keyword id="KW-0441">Lipid A biosynthesis</keyword>
<keyword id="KW-0444">Lipid biosynthesis</keyword>
<keyword id="KW-0443">Lipid metabolism</keyword>
<keyword id="KW-0547">Nucleotide-binding</keyword>
<keyword id="KW-1185">Reference proteome</keyword>
<keyword id="KW-0808">Transferase</keyword>
<evidence type="ECO:0000255" key="1">
    <source>
        <dbReference type="HAMAP-Rule" id="MF_00409"/>
    </source>
</evidence>
<accession>Q6ALV8</accession>
<reference key="1">
    <citation type="journal article" date="2004" name="Environ. Microbiol.">
        <title>The genome of Desulfotalea psychrophila, a sulfate-reducing bacterium from permanently cold Arctic sediments.</title>
        <authorList>
            <person name="Rabus R."/>
            <person name="Ruepp A."/>
            <person name="Frickey T."/>
            <person name="Rattei T."/>
            <person name="Fartmann B."/>
            <person name="Stark M."/>
            <person name="Bauer M."/>
            <person name="Zibat A."/>
            <person name="Lombardot T."/>
            <person name="Becker I."/>
            <person name="Amann J."/>
            <person name="Gellner K."/>
            <person name="Teeling H."/>
            <person name="Leuschner W.D."/>
            <person name="Gloeckner F.-O."/>
            <person name="Lupas A.N."/>
            <person name="Amann R."/>
            <person name="Klenk H.-P."/>
        </authorList>
    </citation>
    <scope>NUCLEOTIDE SEQUENCE [LARGE SCALE GENOMIC DNA]</scope>
    <source>
        <strain>DSM 12343 / LSv54</strain>
    </source>
</reference>
<gene>
    <name evidence="1" type="primary">lpxK</name>
    <name type="ordered locus">DP1938</name>
</gene>
<comment type="function">
    <text evidence="1">Transfers the gamma-phosphate of ATP to the 4'-position of a tetraacyldisaccharide 1-phosphate intermediate (termed DS-1-P) to form tetraacyldisaccharide 1,4'-bis-phosphate (lipid IVA).</text>
</comment>
<comment type="catalytic activity">
    <reaction evidence="1">
        <text>a lipid A disaccharide + ATP = a lipid IVA + ADP + H(+)</text>
        <dbReference type="Rhea" id="RHEA:67840"/>
        <dbReference type="ChEBI" id="CHEBI:15378"/>
        <dbReference type="ChEBI" id="CHEBI:30616"/>
        <dbReference type="ChEBI" id="CHEBI:176343"/>
        <dbReference type="ChEBI" id="CHEBI:176425"/>
        <dbReference type="ChEBI" id="CHEBI:456216"/>
        <dbReference type="EC" id="2.7.1.130"/>
    </reaction>
</comment>
<comment type="pathway">
    <text evidence="1">Glycolipid biosynthesis; lipid IV(A) biosynthesis; lipid IV(A) from (3R)-3-hydroxytetradecanoyl-[acyl-carrier-protein] and UDP-N-acetyl-alpha-D-glucosamine: step 6/6.</text>
</comment>
<comment type="similarity">
    <text evidence="1">Belongs to the LpxK family.</text>
</comment>
<organism>
    <name type="scientific">Desulfotalea psychrophila (strain LSv54 / DSM 12343)</name>
    <dbReference type="NCBI Taxonomy" id="177439"/>
    <lineage>
        <taxon>Bacteria</taxon>
        <taxon>Pseudomonadati</taxon>
        <taxon>Thermodesulfobacteriota</taxon>
        <taxon>Desulfobulbia</taxon>
        <taxon>Desulfobulbales</taxon>
        <taxon>Desulfocapsaceae</taxon>
        <taxon>Desulfotalea</taxon>
    </lineage>
</organism>
<feature type="chain" id="PRO_0000229954" description="Tetraacyldisaccharide 4'-kinase">
    <location>
        <begin position="1"/>
        <end position="348"/>
    </location>
</feature>
<feature type="binding site" evidence="1">
    <location>
        <begin position="50"/>
        <end position="57"/>
    </location>
    <ligand>
        <name>ATP</name>
        <dbReference type="ChEBI" id="CHEBI:30616"/>
    </ligand>
</feature>
<proteinExistence type="inferred from homology"/>